<organism>
    <name type="scientific">Bacillus anthracis (strain CDC 684 / NRRL 3495)</name>
    <dbReference type="NCBI Taxonomy" id="568206"/>
    <lineage>
        <taxon>Bacteria</taxon>
        <taxon>Bacillati</taxon>
        <taxon>Bacillota</taxon>
        <taxon>Bacilli</taxon>
        <taxon>Bacillales</taxon>
        <taxon>Bacillaceae</taxon>
        <taxon>Bacillus</taxon>
        <taxon>Bacillus cereus group</taxon>
    </lineage>
</organism>
<proteinExistence type="inferred from homology"/>
<comment type="function">
    <text evidence="1">May catalyze the final step in cell wall teichoic acid biosynthesis, the transfer of the anionic cell wall polymers (APs) from their lipid-linked precursor to the cell wall peptidoglycan (PG).</text>
</comment>
<comment type="pathway">
    <text evidence="1">Cell wall biogenesis.</text>
</comment>
<comment type="subcellular location">
    <subcellularLocation>
        <location evidence="1">Cell membrane</location>
        <topology evidence="1">Single-pass type II membrane protein</topology>
    </subcellularLocation>
</comment>
<comment type="similarity">
    <text evidence="1">Belongs to the LytR/CpsA/Psr (LCP) family.</text>
</comment>
<sequence length="303" mass="33759">MKKKILFWVLGILGVLIIGGGIYAYNVYSSVSNTLKEVHQPLKRDQNNSNVGEKVSKSEPVSILLLGADERGEDKGRSDSLMVITLNPKNNSMKTVSIPRDTYTEIVGKGKSDKINHAYAFGGVDMSVATVENFLNVPINYYIEVNMEGFKDIVDAVGGVDVKNDLEFTQDGHHFAKGNIHLTGDQALAFTRMRKQDPRGDFGRQMRQRQVMQGVIKKGASFSSLTGYGDVLSAIQKNVKTNLTQDQMFDMQKNYKDCLKNSEDIQIPGDGHKAADGIWYYYVPDAAKQDLTNKLRTHLEVTK</sequence>
<evidence type="ECO:0000255" key="1">
    <source>
        <dbReference type="HAMAP-Rule" id="MF_01140"/>
    </source>
</evidence>
<feature type="chain" id="PRO_1000164095" description="Polyisoprenyl-teichoic acid--peptidoglycan teichoic acid transferase TagU">
    <location>
        <begin position="1"/>
        <end position="303"/>
    </location>
</feature>
<feature type="topological domain" description="Cytoplasmic" evidence="1">
    <location>
        <begin position="1"/>
        <end position="4"/>
    </location>
</feature>
<feature type="transmembrane region" description="Helical; Signal-anchor for type II membrane protein" evidence="1">
    <location>
        <begin position="5"/>
        <end position="25"/>
    </location>
</feature>
<feature type="topological domain" description="Extracellular" evidence="1">
    <location>
        <begin position="26"/>
        <end position="303"/>
    </location>
</feature>
<keyword id="KW-1003">Cell membrane</keyword>
<keyword id="KW-0961">Cell wall biogenesis/degradation</keyword>
<keyword id="KW-0472">Membrane</keyword>
<keyword id="KW-0735">Signal-anchor</keyword>
<keyword id="KW-0808">Transferase</keyword>
<keyword id="KW-0812">Transmembrane</keyword>
<keyword id="KW-1133">Transmembrane helix</keyword>
<protein>
    <recommendedName>
        <fullName evidence="1">Polyisoprenyl-teichoic acid--peptidoglycan teichoic acid transferase TagU</fullName>
        <ecNumber evidence="1">2.7.8.-</ecNumber>
    </recommendedName>
</protein>
<reference key="1">
    <citation type="submission" date="2008-10" db="EMBL/GenBank/DDBJ databases">
        <title>Genome sequence of Bacillus anthracis str. CDC 684.</title>
        <authorList>
            <person name="Dodson R.J."/>
            <person name="Munk A.C."/>
            <person name="Brettin T."/>
            <person name="Bruce D."/>
            <person name="Detter C."/>
            <person name="Tapia R."/>
            <person name="Han C."/>
            <person name="Sutton G."/>
            <person name="Sims D."/>
        </authorList>
    </citation>
    <scope>NUCLEOTIDE SEQUENCE [LARGE SCALE GENOMIC DNA]</scope>
    <source>
        <strain>CDC 684 / NRRL 3495</strain>
    </source>
</reference>
<accession>C3LEN7</accession>
<name>TAGU_BACAC</name>
<gene>
    <name evidence="1" type="primary">tagU</name>
    <name type="ordered locus">BAMEG_5552</name>
</gene>
<dbReference type="EC" id="2.7.8.-" evidence="1"/>
<dbReference type="EMBL" id="CP001215">
    <property type="protein sequence ID" value="ACP14988.1"/>
    <property type="molecule type" value="Genomic_DNA"/>
</dbReference>
<dbReference type="SMR" id="C3LEN7"/>
<dbReference type="KEGG" id="bah:BAMEG_5552"/>
<dbReference type="HOGENOM" id="CLU_016455_2_2_9"/>
<dbReference type="GO" id="GO:0005886">
    <property type="term" value="C:plasma membrane"/>
    <property type="evidence" value="ECO:0007669"/>
    <property type="project" value="UniProtKB-SubCell"/>
</dbReference>
<dbReference type="GO" id="GO:0016780">
    <property type="term" value="F:phosphotransferase activity, for other substituted phosphate groups"/>
    <property type="evidence" value="ECO:0007669"/>
    <property type="project" value="UniProtKB-UniRule"/>
</dbReference>
<dbReference type="GO" id="GO:0070726">
    <property type="term" value="P:cell wall assembly"/>
    <property type="evidence" value="ECO:0007669"/>
    <property type="project" value="UniProtKB-UniRule"/>
</dbReference>
<dbReference type="FunFam" id="3.40.630.190:FF:000003">
    <property type="entry name" value="Polyisoprenyl-teichoic acid--peptidoglycan teichoic acid transferase TagU"/>
    <property type="match status" value="1"/>
</dbReference>
<dbReference type="Gene3D" id="3.40.630.190">
    <property type="entry name" value="LCP protein"/>
    <property type="match status" value="1"/>
</dbReference>
<dbReference type="HAMAP" id="MF_01140">
    <property type="entry name" value="TagU_transferase"/>
    <property type="match status" value="1"/>
</dbReference>
<dbReference type="InterPro" id="IPR050922">
    <property type="entry name" value="LytR/CpsA/Psr_CW_biosynth"/>
</dbReference>
<dbReference type="InterPro" id="IPR004474">
    <property type="entry name" value="LytR_CpsA_psr"/>
</dbReference>
<dbReference type="InterPro" id="IPR023734">
    <property type="entry name" value="TagU"/>
</dbReference>
<dbReference type="NCBIfam" id="TIGR00350">
    <property type="entry name" value="lytR_cpsA_psr"/>
    <property type="match status" value="1"/>
</dbReference>
<dbReference type="NCBIfam" id="NF006897">
    <property type="entry name" value="PRK09379.1"/>
    <property type="match status" value="1"/>
</dbReference>
<dbReference type="PANTHER" id="PTHR33392">
    <property type="entry name" value="POLYISOPRENYL-TEICHOIC ACID--PEPTIDOGLYCAN TEICHOIC ACID TRANSFERASE TAGU"/>
    <property type="match status" value="1"/>
</dbReference>
<dbReference type="PANTHER" id="PTHR33392:SF6">
    <property type="entry name" value="POLYISOPRENYL-TEICHOIC ACID--PEPTIDOGLYCAN TEICHOIC ACID TRANSFERASE TAGU"/>
    <property type="match status" value="1"/>
</dbReference>
<dbReference type="Pfam" id="PF03816">
    <property type="entry name" value="LytR_cpsA_psr"/>
    <property type="match status" value="1"/>
</dbReference>